<feature type="chain" id="PRO_0000300469" description="Transmembrane protein 184A">
    <location>
        <begin position="1"/>
        <end position="425"/>
    </location>
</feature>
<feature type="transmembrane region" description="Helical" evidence="3">
    <location>
        <begin position="51"/>
        <end position="71"/>
    </location>
</feature>
<feature type="transmembrane region" description="Helical" evidence="3">
    <location>
        <begin position="96"/>
        <end position="116"/>
    </location>
</feature>
<feature type="transmembrane region" description="Helical" evidence="3">
    <location>
        <begin position="133"/>
        <end position="153"/>
    </location>
</feature>
<feature type="transmembrane region" description="Helical" evidence="3">
    <location>
        <begin position="189"/>
        <end position="209"/>
    </location>
</feature>
<feature type="transmembrane region" description="Helical" evidence="3">
    <location>
        <begin position="226"/>
        <end position="246"/>
    </location>
</feature>
<feature type="transmembrane region" description="Helical" evidence="3">
    <location>
        <begin position="261"/>
        <end position="281"/>
    </location>
</feature>
<feature type="transmembrane region" description="Helical" evidence="3">
    <location>
        <begin position="303"/>
        <end position="323"/>
    </location>
</feature>
<feature type="region of interest" description="Disordered" evidence="4">
    <location>
        <begin position="375"/>
        <end position="425"/>
    </location>
</feature>
<feature type="compositionally biased region" description="Low complexity" evidence="4">
    <location>
        <begin position="392"/>
        <end position="402"/>
    </location>
</feature>
<name>T184A_RAT</name>
<organism>
    <name type="scientific">Rattus norvegicus</name>
    <name type="common">Rat</name>
    <dbReference type="NCBI Taxonomy" id="10116"/>
    <lineage>
        <taxon>Eukaryota</taxon>
        <taxon>Metazoa</taxon>
        <taxon>Chordata</taxon>
        <taxon>Craniata</taxon>
        <taxon>Vertebrata</taxon>
        <taxon>Euteleostomi</taxon>
        <taxon>Mammalia</taxon>
        <taxon>Eutheria</taxon>
        <taxon>Euarchontoglires</taxon>
        <taxon>Glires</taxon>
        <taxon>Rodentia</taxon>
        <taxon>Myomorpha</taxon>
        <taxon>Muroidea</taxon>
        <taxon>Muridae</taxon>
        <taxon>Murinae</taxon>
        <taxon>Rattus</taxon>
    </lineage>
</organism>
<comment type="function">
    <text evidence="2 5">Acts as a heparin receptor in vascular cells (PubMed:26769966). May be involved in vesicle transport in exocrine cells and Sertoli cells (By similarity).</text>
</comment>
<comment type="subcellular location">
    <subcellularLocation>
        <location evidence="5">Cell membrane</location>
        <topology evidence="3">Multi-pass membrane protein</topology>
    </subcellularLocation>
    <subcellularLocation>
        <location evidence="5">Cytoplasm</location>
        <location evidence="5">Perinuclear region</location>
    </subcellularLocation>
    <subcellularLocation>
        <location evidence="2">Early endosome membrane</location>
        <topology evidence="6">Multi-pass membrane protein</topology>
    </subcellularLocation>
    <subcellularLocation>
        <location evidence="2">Endosome</location>
    </subcellularLocation>
    <subcellularLocation>
        <location evidence="2">Cytoplasmic vesicle</location>
        <location evidence="2">Secretory vesicle membrane</location>
    </subcellularLocation>
    <subcellularLocation>
        <location evidence="1">Cytoplasmic vesicle membrane</location>
        <topology evidence="3">Multi-pass membrane protein</topology>
    </subcellularLocation>
    <text evidence="5">Colocalizes with CAV1 (PubMed:26769966).</text>
</comment>
<comment type="tissue specificity">
    <text evidence="5">Expressed in vascular cells (at protein level).</text>
</comment>
<comment type="similarity">
    <text evidence="6">Belongs to the TMEM184 family.</text>
</comment>
<comment type="sequence caution" evidence="6">
    <conflict type="erroneous initiation">
        <sequence resource="EMBL-CDS" id="AAH83910"/>
    </conflict>
</comment>
<accession>Q4QQS1</accession>
<accession>Q5XHY9</accession>
<sequence>MRNASGFLKTAGAPLVSATWLPPSPPPAMPMVAAGPQMERVDNGSQGAPQLFLTSALARGVSGVFVWTALLLTGHQIYSHLRSYTVPREQRFVIRLLFIVPIYAFDSWLSLLLLGGHPYYVYFDSVRDCYEAFVIYSFLTLCFQYLGGESAIMAEIRGKPIRSSCFYGTCCLRGMSYSITFLRFCKQATLQFCIVKPVMALITIILQAFDKYHDGDFNIHSGYLYVTLVYNASVSLALYALFLFYFATRDLLRPFEPVLKFLTIKAIIFLSFWQGMLLAILERCGVIPEVQAVDGTRVGAGTLAAGYQNFLICIEMLFASLALRYAFPSQVYSEKKNSPAPPAPMQSISSGLKETISPQDIVQDAIHNFSPAYQQYTQQSTHEAPGPGQGGHPSPSTHPGPASGSGGGKKSRNIEKRMLIPSEDL</sequence>
<dbReference type="EMBL" id="BC083910">
    <property type="protein sequence ID" value="AAH83910.1"/>
    <property type="status" value="ALT_INIT"/>
    <property type="molecule type" value="mRNA"/>
</dbReference>
<dbReference type="EMBL" id="BC098056">
    <property type="protein sequence ID" value="AAH98056.1"/>
    <property type="molecule type" value="mRNA"/>
</dbReference>
<dbReference type="RefSeq" id="NP_001020584.1">
    <property type="nucleotide sequence ID" value="NM_001025413.1"/>
</dbReference>
<dbReference type="RefSeq" id="XP_006249001.1">
    <property type="nucleotide sequence ID" value="XM_006248939.5"/>
</dbReference>
<dbReference type="FunCoup" id="Q4QQS1">
    <property type="interactions" value="594"/>
</dbReference>
<dbReference type="STRING" id="10116.ENSRNOP00000073059"/>
<dbReference type="iPTMnet" id="Q4QQS1"/>
<dbReference type="PhosphoSitePlus" id="Q4QQS1"/>
<dbReference type="PaxDb" id="10116-ENSRNOP00000001718"/>
<dbReference type="GeneID" id="304325"/>
<dbReference type="KEGG" id="rno:304325"/>
<dbReference type="UCSC" id="RGD:1306702">
    <property type="organism name" value="rat"/>
</dbReference>
<dbReference type="AGR" id="RGD:1306702"/>
<dbReference type="CTD" id="202915"/>
<dbReference type="RGD" id="1306702">
    <property type="gene designation" value="Tmem184a"/>
</dbReference>
<dbReference type="VEuPathDB" id="HostDB:ENSRNOG00000001275"/>
<dbReference type="eggNOG" id="KOG2641">
    <property type="taxonomic scope" value="Eukaryota"/>
</dbReference>
<dbReference type="HOGENOM" id="CLU_012923_3_0_1"/>
<dbReference type="InParanoid" id="Q4QQS1"/>
<dbReference type="OrthoDB" id="5348404at2759"/>
<dbReference type="PhylomeDB" id="Q4QQS1"/>
<dbReference type="TreeFam" id="TF314160"/>
<dbReference type="PRO" id="PR:Q4QQS1"/>
<dbReference type="Proteomes" id="UP000002494">
    <property type="component" value="Chromosome 12"/>
</dbReference>
<dbReference type="Bgee" id="ENSRNOG00000001275">
    <property type="expression patterns" value="Expressed in stomach and 14 other cell types or tissues"/>
</dbReference>
<dbReference type="ExpressionAtlas" id="Q4QQS1">
    <property type="expression patterns" value="baseline and differential"/>
</dbReference>
<dbReference type="GO" id="GO:0030659">
    <property type="term" value="C:cytoplasmic vesicle membrane"/>
    <property type="evidence" value="ECO:0000250"/>
    <property type="project" value="UniProtKB"/>
</dbReference>
<dbReference type="GO" id="GO:0031901">
    <property type="term" value="C:early endosome membrane"/>
    <property type="evidence" value="ECO:0000250"/>
    <property type="project" value="UniProtKB"/>
</dbReference>
<dbReference type="GO" id="GO:0005768">
    <property type="term" value="C:endosome"/>
    <property type="evidence" value="ECO:0000250"/>
    <property type="project" value="UniProtKB"/>
</dbReference>
<dbReference type="GO" id="GO:0048471">
    <property type="term" value="C:perinuclear region of cytoplasm"/>
    <property type="evidence" value="ECO:0000250"/>
    <property type="project" value="UniProtKB"/>
</dbReference>
<dbReference type="GO" id="GO:0005886">
    <property type="term" value="C:plasma membrane"/>
    <property type="evidence" value="ECO:0000314"/>
    <property type="project" value="UniProtKB"/>
</dbReference>
<dbReference type="GO" id="GO:0030667">
    <property type="term" value="C:secretory granule membrane"/>
    <property type="evidence" value="ECO:0000250"/>
    <property type="project" value="UniProtKB"/>
</dbReference>
<dbReference type="GO" id="GO:0030658">
    <property type="term" value="C:transport vesicle membrane"/>
    <property type="evidence" value="ECO:0007669"/>
    <property type="project" value="UniProtKB-SubCell"/>
</dbReference>
<dbReference type="GO" id="GO:0008201">
    <property type="term" value="F:heparin binding"/>
    <property type="evidence" value="ECO:0000250"/>
    <property type="project" value="UniProtKB"/>
</dbReference>
<dbReference type="GO" id="GO:0022857">
    <property type="term" value="F:transmembrane transporter activity"/>
    <property type="evidence" value="ECO:0000318"/>
    <property type="project" value="GO_Central"/>
</dbReference>
<dbReference type="GO" id="GO:0018992">
    <property type="term" value="P:germ-line sex determination"/>
    <property type="evidence" value="ECO:0000266"/>
    <property type="project" value="RGD"/>
</dbReference>
<dbReference type="GO" id="GO:0032880">
    <property type="term" value="P:regulation of protein localization"/>
    <property type="evidence" value="ECO:0000266"/>
    <property type="project" value="RGD"/>
</dbReference>
<dbReference type="GO" id="GO:0051046">
    <property type="term" value="P:regulation of secretion"/>
    <property type="evidence" value="ECO:0000266"/>
    <property type="project" value="RGD"/>
</dbReference>
<dbReference type="InterPro" id="IPR005178">
    <property type="entry name" value="Ostalpha/TMEM184C"/>
</dbReference>
<dbReference type="PANTHER" id="PTHR23423">
    <property type="entry name" value="ORGANIC SOLUTE TRANSPORTER-RELATED"/>
    <property type="match status" value="1"/>
</dbReference>
<dbReference type="Pfam" id="PF03619">
    <property type="entry name" value="Solute_trans_a"/>
    <property type="match status" value="1"/>
</dbReference>
<dbReference type="SMART" id="SM01417">
    <property type="entry name" value="Solute_trans_a"/>
    <property type="match status" value="1"/>
</dbReference>
<evidence type="ECO:0000250" key="1">
    <source>
        <dbReference type="UniProtKB" id="Q1RMW2"/>
    </source>
</evidence>
<evidence type="ECO:0000250" key="2">
    <source>
        <dbReference type="UniProtKB" id="Q3UFJ6"/>
    </source>
</evidence>
<evidence type="ECO:0000255" key="3"/>
<evidence type="ECO:0000256" key="4">
    <source>
        <dbReference type="SAM" id="MobiDB-lite"/>
    </source>
</evidence>
<evidence type="ECO:0000269" key="5">
    <source>
    </source>
</evidence>
<evidence type="ECO:0000305" key="6"/>
<gene>
    <name type="primary">Tmem184a</name>
</gene>
<proteinExistence type="evidence at protein level"/>
<reference key="1">
    <citation type="journal article" date="2004" name="Genome Res.">
        <title>The status, quality, and expansion of the NIH full-length cDNA project: the Mammalian Gene Collection (MGC).</title>
        <authorList>
            <consortium name="The MGC Project Team"/>
        </authorList>
    </citation>
    <scope>NUCLEOTIDE SEQUENCE [LARGE SCALE MRNA]</scope>
    <source>
        <tissue>Testis</tissue>
    </source>
</reference>
<reference key="2">
    <citation type="journal article" date="2016" name="J. Biol. Chem.">
        <title>Transmembrane protein 184A is a receptor required for vascular smooth muscle cell responses to heparin.</title>
        <authorList>
            <person name="Pugh R.J."/>
            <person name="Slee J.B."/>
            <person name="Farwell S.L."/>
            <person name="Li Y."/>
            <person name="Barthol T."/>
            <person name="Patton W.A."/>
            <person name="Lowe-Krentz L.J."/>
        </authorList>
    </citation>
    <scope>TISSUE SPECIFICITY</scope>
    <scope>SUBCELLULAR LOCATION</scope>
    <scope>FUNCTION</scope>
    <scope>IDENTIFICATION BY MASS SPECTROMETRY</scope>
</reference>
<protein>
    <recommendedName>
        <fullName>Transmembrane protein 184A</fullName>
    </recommendedName>
</protein>
<keyword id="KW-1003">Cell membrane</keyword>
<keyword id="KW-0963">Cytoplasm</keyword>
<keyword id="KW-0968">Cytoplasmic vesicle</keyword>
<keyword id="KW-0967">Endosome</keyword>
<keyword id="KW-0472">Membrane</keyword>
<keyword id="KW-1185">Reference proteome</keyword>
<keyword id="KW-0812">Transmembrane</keyword>
<keyword id="KW-1133">Transmembrane helix</keyword>